<feature type="chain" id="PRO_0000257804" description="Homeobox-leucine zipper protein ATHB-53">
    <location>
        <begin position="1"/>
        <end position="228"/>
    </location>
</feature>
<feature type="DNA-binding region" description="Homeobox" evidence="1">
    <location>
        <begin position="68"/>
        <end position="127"/>
    </location>
</feature>
<feature type="region of interest" description="Disordered" evidence="2">
    <location>
        <begin position="36"/>
        <end position="62"/>
    </location>
</feature>
<feature type="region of interest" description="Leucine-zipper">
    <location>
        <begin position="128"/>
        <end position="156"/>
    </location>
</feature>
<feature type="compositionally biased region" description="Basic residues" evidence="2">
    <location>
        <begin position="44"/>
        <end position="53"/>
    </location>
</feature>
<accession>Q9LVR0</accession>
<reference key="1">
    <citation type="journal article" date="2005" name="Biochem. Biophys. Res. Commun.">
        <title>Induction of a homeodomain-leucine zipper gene by auxin is inhibited by cytokinin in Arabidopsis roots.</title>
        <authorList>
            <person name="Son O."/>
            <person name="Cho H.-Y."/>
            <person name="Kim M.-R."/>
            <person name="Lee H."/>
            <person name="Lee M.-S."/>
            <person name="Song E."/>
            <person name="Park J.H."/>
            <person name="Nam K.H."/>
            <person name="Chun J.-Y."/>
            <person name="Kim H.-J."/>
            <person name="Hong S.-K."/>
            <person name="Chung Y.-Y."/>
            <person name="Hur C.-G."/>
            <person name="Cho H.-T."/>
            <person name="Cheon C.-I."/>
        </authorList>
    </citation>
    <scope>NUCLEOTIDE SEQUENCE [MRNA]</scope>
    <scope>TISSUE SPECIFICITY</scope>
    <scope>INDUCTION</scope>
    <scope>FUNCTION</scope>
</reference>
<reference key="2">
    <citation type="journal article" date="2000" name="DNA Res.">
        <title>Structural analysis of Arabidopsis thaliana chromosome 5. X. Sequence features of the regions of 3,076,755 bp covered by sixty P1 and TAC clones.</title>
        <authorList>
            <person name="Sato S."/>
            <person name="Nakamura Y."/>
            <person name="Kaneko T."/>
            <person name="Katoh T."/>
            <person name="Asamizu E."/>
            <person name="Kotani H."/>
            <person name="Tabata S."/>
        </authorList>
    </citation>
    <scope>NUCLEOTIDE SEQUENCE [LARGE SCALE GENOMIC DNA]</scope>
    <source>
        <strain>cv. Columbia</strain>
    </source>
</reference>
<reference key="3">
    <citation type="journal article" date="2017" name="Plant J.">
        <title>Araport11: a complete reannotation of the Arabidopsis thaliana reference genome.</title>
        <authorList>
            <person name="Cheng C.Y."/>
            <person name="Krishnakumar V."/>
            <person name="Chan A.P."/>
            <person name="Thibaud-Nissen F."/>
            <person name="Schobel S."/>
            <person name="Town C.D."/>
        </authorList>
    </citation>
    <scope>GENOME REANNOTATION</scope>
    <source>
        <strain>cv. Columbia</strain>
    </source>
</reference>
<reference key="4">
    <citation type="submission" date="2006-03" db="EMBL/GenBank/DDBJ databases">
        <title>Arabidopsis ORF clones.</title>
        <authorList>
            <person name="Kim C.J."/>
            <person name="Chen H."/>
            <person name="Shinn P."/>
            <person name="Ecker J.R."/>
        </authorList>
    </citation>
    <scope>NUCLEOTIDE SEQUENCE [LARGE SCALE MRNA]</scope>
    <source>
        <strain>cv. Columbia</strain>
    </source>
</reference>
<reference key="5">
    <citation type="journal article" date="2005" name="Plant Physiol.">
        <title>Homeodomain leucine zipper class I genes in Arabidopsis. Expression patterns and phylogenetic relationships.</title>
        <authorList>
            <person name="Henriksson E."/>
            <person name="Olsson A.S.B."/>
            <person name="Johannesson H."/>
            <person name="Johansson H."/>
            <person name="Hanson J."/>
            <person name="Engstroem P."/>
            <person name="Soederman E."/>
        </authorList>
    </citation>
    <scope>GENE FAMILY</scope>
    <scope>TISSUE SPECIFICITY</scope>
    <scope>INDUCTION</scope>
</reference>
<organism>
    <name type="scientific">Arabidopsis thaliana</name>
    <name type="common">Mouse-ear cress</name>
    <dbReference type="NCBI Taxonomy" id="3702"/>
    <lineage>
        <taxon>Eukaryota</taxon>
        <taxon>Viridiplantae</taxon>
        <taxon>Streptophyta</taxon>
        <taxon>Embryophyta</taxon>
        <taxon>Tracheophyta</taxon>
        <taxon>Spermatophyta</taxon>
        <taxon>Magnoliopsida</taxon>
        <taxon>eudicotyledons</taxon>
        <taxon>Gunneridae</taxon>
        <taxon>Pentapetalae</taxon>
        <taxon>rosids</taxon>
        <taxon>malvids</taxon>
        <taxon>Brassicales</taxon>
        <taxon>Brassicaceae</taxon>
        <taxon>Camelineae</taxon>
        <taxon>Arabidopsis</taxon>
    </lineage>
</organism>
<protein>
    <recommendedName>
        <fullName>Homeobox-leucine zipper protein ATHB-53</fullName>
    </recommendedName>
    <alternativeName>
        <fullName>HD-ZIP protein ATHB-53</fullName>
    </alternativeName>
    <alternativeName>
        <fullName>Homeodomain transcription factor ATHB-53</fullName>
    </alternativeName>
</protein>
<comment type="function">
    <text evidence="3">Probable transcription factor that may play a regulatory role in auxin/cytokinin signaling during root development.</text>
</comment>
<comment type="subcellular location">
    <subcellularLocation>
        <location evidence="5">Nucleus</location>
    </subcellularLocation>
</comment>
<comment type="tissue specificity">
    <text evidence="3 4">Expressed in root meristem, late flowers and siliques.</text>
</comment>
<comment type="induction">
    <text evidence="3 4">By abscisic acid (ABA), by salt stress, by indole-3-acetic acid (IAA) and during darkness conditions. Down-regulated by cytokinin.</text>
</comment>
<comment type="similarity">
    <text evidence="5">Belongs to the HD-ZIP homeobox family. Class I subfamily.</text>
</comment>
<proteinExistence type="evidence at transcript level"/>
<sequence>MDHGRLMDDQMMLGSQVYPYTTQPQNSHCIIVNQIDGGEESKPVKRRRKRRSKGSSATNEEDVAEIGGMLRKRKLTDEQVNMLEYSFGNEHKLESGRKEKIAGELGLDPRQVAVWFQNRRARWKNKKLEEEYAKLKNHHDNVVLGQCQLESQILKLTEQLSEAQSEIRKLSERLEEMPTNSSSSSLSVEANNAPTDFELAPETNYNIPFYMLDNNYLQSMEYWDGLYV</sequence>
<name>ATB53_ARATH</name>
<dbReference type="EMBL" id="AY683477">
    <property type="protein sequence ID" value="AAV85903.1"/>
    <property type="molecule type" value="mRNA"/>
</dbReference>
<dbReference type="EMBL" id="AB018119">
    <property type="protein sequence ID" value="BAA97276.1"/>
    <property type="molecule type" value="Genomic_DNA"/>
</dbReference>
<dbReference type="EMBL" id="CP002688">
    <property type="protein sequence ID" value="AED98253.1"/>
    <property type="molecule type" value="Genomic_DNA"/>
</dbReference>
<dbReference type="EMBL" id="BT024847">
    <property type="protein sequence ID" value="ABD60730.1"/>
    <property type="molecule type" value="mRNA"/>
</dbReference>
<dbReference type="SMR" id="Q9LVR0"/>
<dbReference type="BioGRID" id="22045">
    <property type="interactions" value="6"/>
</dbReference>
<dbReference type="FunCoup" id="Q9LVR0">
    <property type="interactions" value="29"/>
</dbReference>
<dbReference type="IntAct" id="Q9LVR0">
    <property type="interactions" value="5"/>
</dbReference>
<dbReference type="STRING" id="3702.Q9LVR0"/>
<dbReference type="PaxDb" id="3702-AT5G66700.1"/>
<dbReference type="ProteomicsDB" id="246536"/>
<dbReference type="EnsemblPlants" id="AT5G66700.1">
    <property type="protein sequence ID" value="AT5G66700.1"/>
    <property type="gene ID" value="AT5G66700"/>
</dbReference>
<dbReference type="GeneID" id="836803"/>
<dbReference type="Gramene" id="AT5G66700.1">
    <property type="protein sequence ID" value="AT5G66700.1"/>
    <property type="gene ID" value="AT5G66700"/>
</dbReference>
<dbReference type="KEGG" id="ath:AT5G66700"/>
<dbReference type="Araport" id="AT5G66700"/>
<dbReference type="TAIR" id="AT5G66700">
    <property type="gene designation" value="HB53"/>
</dbReference>
<dbReference type="eggNOG" id="KOG0483">
    <property type="taxonomic scope" value="Eukaryota"/>
</dbReference>
<dbReference type="HOGENOM" id="CLU_100008_1_0_1"/>
<dbReference type="InParanoid" id="Q9LVR0"/>
<dbReference type="OMA" id="MHIPETY"/>
<dbReference type="OrthoDB" id="6159439at2759"/>
<dbReference type="PhylomeDB" id="Q9LVR0"/>
<dbReference type="PRO" id="PR:Q9LVR0"/>
<dbReference type="Proteomes" id="UP000006548">
    <property type="component" value="Chromosome 5"/>
</dbReference>
<dbReference type="ExpressionAtlas" id="Q9LVR0">
    <property type="expression patterns" value="baseline and differential"/>
</dbReference>
<dbReference type="GO" id="GO:0005634">
    <property type="term" value="C:nucleus"/>
    <property type="evidence" value="ECO:0007669"/>
    <property type="project" value="UniProtKB-SubCell"/>
</dbReference>
<dbReference type="GO" id="GO:0003677">
    <property type="term" value="F:DNA binding"/>
    <property type="evidence" value="ECO:0000250"/>
    <property type="project" value="TAIR"/>
</dbReference>
<dbReference type="GO" id="GO:0003700">
    <property type="term" value="F:DNA-binding transcription factor activity"/>
    <property type="evidence" value="ECO:0000250"/>
    <property type="project" value="TAIR"/>
</dbReference>
<dbReference type="GO" id="GO:0000981">
    <property type="term" value="F:DNA-binding transcription factor activity, RNA polymerase II-specific"/>
    <property type="evidence" value="ECO:0007669"/>
    <property type="project" value="InterPro"/>
</dbReference>
<dbReference type="GO" id="GO:0009733">
    <property type="term" value="P:response to auxin"/>
    <property type="evidence" value="ECO:0000270"/>
    <property type="project" value="TAIR"/>
</dbReference>
<dbReference type="GO" id="GO:0048364">
    <property type="term" value="P:root development"/>
    <property type="evidence" value="ECO:0000304"/>
    <property type="project" value="TAIR"/>
</dbReference>
<dbReference type="CDD" id="cd00086">
    <property type="entry name" value="homeodomain"/>
    <property type="match status" value="1"/>
</dbReference>
<dbReference type="FunFam" id="1.10.10.60:FF:000241">
    <property type="entry name" value="homeobox-leucine zipper protein ATHB-40"/>
    <property type="match status" value="1"/>
</dbReference>
<dbReference type="Gene3D" id="1.10.10.60">
    <property type="entry name" value="Homeodomain-like"/>
    <property type="match status" value="1"/>
</dbReference>
<dbReference type="InterPro" id="IPR001356">
    <property type="entry name" value="HD"/>
</dbReference>
<dbReference type="InterPro" id="IPR045224">
    <property type="entry name" value="HDZip_class_I_plant"/>
</dbReference>
<dbReference type="InterPro" id="IPR017970">
    <property type="entry name" value="Homeobox_CS"/>
</dbReference>
<dbReference type="InterPro" id="IPR009057">
    <property type="entry name" value="Homeodomain-like_sf"/>
</dbReference>
<dbReference type="InterPro" id="IPR000047">
    <property type="entry name" value="HTH_motif"/>
</dbReference>
<dbReference type="PANTHER" id="PTHR24326">
    <property type="entry name" value="HOMEOBOX-LEUCINE ZIPPER PROTEIN"/>
    <property type="match status" value="1"/>
</dbReference>
<dbReference type="PANTHER" id="PTHR24326:SF533">
    <property type="entry name" value="HOMEOBOX-LEUCINE ZIPPER PROTEIN ATHB-53"/>
    <property type="match status" value="1"/>
</dbReference>
<dbReference type="Pfam" id="PF00046">
    <property type="entry name" value="Homeodomain"/>
    <property type="match status" value="1"/>
</dbReference>
<dbReference type="PRINTS" id="PR00031">
    <property type="entry name" value="HTHREPRESSR"/>
</dbReference>
<dbReference type="SMART" id="SM00389">
    <property type="entry name" value="HOX"/>
    <property type="match status" value="1"/>
</dbReference>
<dbReference type="SUPFAM" id="SSF46689">
    <property type="entry name" value="Homeodomain-like"/>
    <property type="match status" value="1"/>
</dbReference>
<dbReference type="PROSITE" id="PS00027">
    <property type="entry name" value="HOMEOBOX_1"/>
    <property type="match status" value="1"/>
</dbReference>
<dbReference type="PROSITE" id="PS50071">
    <property type="entry name" value="HOMEOBOX_2"/>
    <property type="match status" value="1"/>
</dbReference>
<evidence type="ECO:0000255" key="1">
    <source>
        <dbReference type="PROSITE-ProRule" id="PRU00108"/>
    </source>
</evidence>
<evidence type="ECO:0000256" key="2">
    <source>
        <dbReference type="SAM" id="MobiDB-lite"/>
    </source>
</evidence>
<evidence type="ECO:0000269" key="3">
    <source>
    </source>
</evidence>
<evidence type="ECO:0000269" key="4">
    <source>
    </source>
</evidence>
<evidence type="ECO:0000305" key="5"/>
<gene>
    <name type="primary">ATHB-53</name>
    <name type="synonym">HB-8</name>
    <name type="ordered locus">At5g66700</name>
    <name type="ORF">MSN2.9</name>
</gene>
<keyword id="KW-0238">DNA-binding</keyword>
<keyword id="KW-0371">Homeobox</keyword>
<keyword id="KW-0539">Nucleus</keyword>
<keyword id="KW-1185">Reference proteome</keyword>
<keyword id="KW-0346">Stress response</keyword>
<keyword id="KW-0804">Transcription</keyword>
<keyword id="KW-0805">Transcription regulation</keyword>